<name>HFQ_FERNB</name>
<protein>
    <recommendedName>
        <fullName evidence="1">RNA-binding protein Hfq</fullName>
    </recommendedName>
</protein>
<evidence type="ECO:0000255" key="1">
    <source>
        <dbReference type="HAMAP-Rule" id="MF_00436"/>
    </source>
</evidence>
<evidence type="ECO:0000255" key="2">
    <source>
        <dbReference type="PROSITE-ProRule" id="PRU01346"/>
    </source>
</evidence>
<accession>A7HJA5</accession>
<comment type="function">
    <text evidence="1">RNA chaperone that binds small regulatory RNA (sRNAs) and mRNAs to facilitate mRNA translational regulation in response to envelope stress, environmental stress and changes in metabolite concentrations. Also binds with high specificity to tRNAs.</text>
</comment>
<comment type="subunit">
    <text evidence="1">Homohexamer.</text>
</comment>
<comment type="similarity">
    <text evidence="1">Belongs to the Hfq family.</text>
</comment>
<organism>
    <name type="scientific">Fervidobacterium nodosum (strain ATCC 35602 / DSM 5306 / Rt17-B1)</name>
    <dbReference type="NCBI Taxonomy" id="381764"/>
    <lineage>
        <taxon>Bacteria</taxon>
        <taxon>Thermotogati</taxon>
        <taxon>Thermotogota</taxon>
        <taxon>Thermotogae</taxon>
        <taxon>Thermotogales</taxon>
        <taxon>Fervidobacteriaceae</taxon>
        <taxon>Fervidobacterium</taxon>
    </lineage>
</organism>
<keyword id="KW-1185">Reference proteome</keyword>
<keyword id="KW-0694">RNA-binding</keyword>
<keyword id="KW-0346">Stress response</keyword>
<proteinExistence type="inferred from homology"/>
<dbReference type="EMBL" id="CP000771">
    <property type="protein sequence ID" value="ABS59988.1"/>
    <property type="molecule type" value="Genomic_DNA"/>
</dbReference>
<dbReference type="RefSeq" id="WP_011993311.1">
    <property type="nucleotide sequence ID" value="NC_009718.1"/>
</dbReference>
<dbReference type="SMR" id="A7HJA5"/>
<dbReference type="STRING" id="381764.Fnod_0121"/>
<dbReference type="KEGG" id="fno:Fnod_0121"/>
<dbReference type="eggNOG" id="COG1923">
    <property type="taxonomic scope" value="Bacteria"/>
</dbReference>
<dbReference type="HOGENOM" id="CLU_113688_0_2_0"/>
<dbReference type="OrthoDB" id="9799751at2"/>
<dbReference type="Proteomes" id="UP000002415">
    <property type="component" value="Chromosome"/>
</dbReference>
<dbReference type="GO" id="GO:0005829">
    <property type="term" value="C:cytosol"/>
    <property type="evidence" value="ECO:0007669"/>
    <property type="project" value="TreeGrafter"/>
</dbReference>
<dbReference type="GO" id="GO:0003723">
    <property type="term" value="F:RNA binding"/>
    <property type="evidence" value="ECO:0007669"/>
    <property type="project" value="UniProtKB-UniRule"/>
</dbReference>
<dbReference type="GO" id="GO:0006355">
    <property type="term" value="P:regulation of DNA-templated transcription"/>
    <property type="evidence" value="ECO:0007669"/>
    <property type="project" value="InterPro"/>
</dbReference>
<dbReference type="GO" id="GO:0043487">
    <property type="term" value="P:regulation of RNA stability"/>
    <property type="evidence" value="ECO:0007669"/>
    <property type="project" value="TreeGrafter"/>
</dbReference>
<dbReference type="GO" id="GO:0045974">
    <property type="term" value="P:regulation of translation, ncRNA-mediated"/>
    <property type="evidence" value="ECO:0007669"/>
    <property type="project" value="TreeGrafter"/>
</dbReference>
<dbReference type="CDD" id="cd01716">
    <property type="entry name" value="Hfq"/>
    <property type="match status" value="1"/>
</dbReference>
<dbReference type="Gene3D" id="2.30.30.100">
    <property type="match status" value="1"/>
</dbReference>
<dbReference type="HAMAP" id="MF_00436">
    <property type="entry name" value="Hfq"/>
    <property type="match status" value="1"/>
</dbReference>
<dbReference type="InterPro" id="IPR005001">
    <property type="entry name" value="Hfq"/>
</dbReference>
<dbReference type="InterPro" id="IPR010920">
    <property type="entry name" value="LSM_dom_sf"/>
</dbReference>
<dbReference type="InterPro" id="IPR047575">
    <property type="entry name" value="Sm"/>
</dbReference>
<dbReference type="NCBIfam" id="TIGR02383">
    <property type="entry name" value="Hfq"/>
    <property type="match status" value="1"/>
</dbReference>
<dbReference type="NCBIfam" id="NF001602">
    <property type="entry name" value="PRK00395.1"/>
    <property type="match status" value="1"/>
</dbReference>
<dbReference type="PANTHER" id="PTHR34772">
    <property type="entry name" value="RNA-BINDING PROTEIN HFQ"/>
    <property type="match status" value="1"/>
</dbReference>
<dbReference type="PANTHER" id="PTHR34772:SF1">
    <property type="entry name" value="RNA-BINDING PROTEIN HFQ"/>
    <property type="match status" value="1"/>
</dbReference>
<dbReference type="Pfam" id="PF17209">
    <property type="entry name" value="Hfq"/>
    <property type="match status" value="1"/>
</dbReference>
<dbReference type="SUPFAM" id="SSF50182">
    <property type="entry name" value="Sm-like ribonucleoproteins"/>
    <property type="match status" value="1"/>
</dbReference>
<dbReference type="PROSITE" id="PS52002">
    <property type="entry name" value="SM"/>
    <property type="match status" value="1"/>
</dbReference>
<feature type="chain" id="PRO_1000080664" description="RNA-binding protein Hfq">
    <location>
        <begin position="1"/>
        <end position="88"/>
    </location>
</feature>
<feature type="domain" description="Sm" evidence="2">
    <location>
        <begin position="10"/>
        <end position="70"/>
    </location>
</feature>
<reference key="1">
    <citation type="submission" date="2007-07" db="EMBL/GenBank/DDBJ databases">
        <title>Complete sequence of Fervidobacterium nodosum Rt17-B1.</title>
        <authorList>
            <consortium name="US DOE Joint Genome Institute"/>
            <person name="Copeland A."/>
            <person name="Lucas S."/>
            <person name="Lapidus A."/>
            <person name="Barry K."/>
            <person name="Glavina del Rio T."/>
            <person name="Dalin E."/>
            <person name="Tice H."/>
            <person name="Pitluck S."/>
            <person name="Saunders E."/>
            <person name="Brettin T."/>
            <person name="Bruce D."/>
            <person name="Detter J.C."/>
            <person name="Han C."/>
            <person name="Schmutz J."/>
            <person name="Larimer F."/>
            <person name="Land M."/>
            <person name="Hauser L."/>
            <person name="Kyrpides N."/>
            <person name="Mikhailova N."/>
            <person name="Nelson K."/>
            <person name="Gogarten J.P."/>
            <person name="Noll K."/>
            <person name="Richardson P."/>
        </authorList>
    </citation>
    <scope>NUCLEOTIDE SEQUENCE [LARGE SCALE GENOMIC DNA]</scope>
    <source>
        <strain>ATCC 35602 / DSM 5306 / Rt17-B1</strain>
    </source>
</reference>
<sequence length="88" mass="10383">MAKEKFNLQDRFLNILRTKKIEVKVYLVNGFQTKGIVRSFDNFTVLIESGKQQTLIYKHAISTILPAEYIMLMKTEEEQQEQQEAEQE</sequence>
<gene>
    <name evidence="1" type="primary">hfq</name>
    <name type="ordered locus">Fnod_0121</name>
</gene>